<protein>
    <recommendedName>
        <fullName evidence="1">Large ribosomal subunit protein uL4</fullName>
    </recommendedName>
    <alternativeName>
        <fullName evidence="2">50S ribosomal protein L4</fullName>
    </alternativeName>
</protein>
<proteinExistence type="inferred from homology"/>
<reference key="1">
    <citation type="journal article" date="2003" name="Mol. Microbiol.">
        <title>An integrated analysis of the genome of the hyperthermophilic archaeon Pyrococcus abyssi.</title>
        <authorList>
            <person name="Cohen G.N."/>
            <person name="Barbe V."/>
            <person name="Flament D."/>
            <person name="Galperin M."/>
            <person name="Heilig R."/>
            <person name="Lecompte O."/>
            <person name="Poch O."/>
            <person name="Prieur D."/>
            <person name="Querellou J."/>
            <person name="Ripp R."/>
            <person name="Thierry J.-C."/>
            <person name="Van der Oost J."/>
            <person name="Weissenbach J."/>
            <person name="Zivanovic Y."/>
            <person name="Forterre P."/>
        </authorList>
    </citation>
    <scope>NUCLEOTIDE SEQUENCE [LARGE SCALE GENOMIC DNA]</scope>
    <source>
        <strain>GE5 / Orsay</strain>
    </source>
</reference>
<reference key="2">
    <citation type="journal article" date="2012" name="Curr. Microbiol.">
        <title>Re-annotation of two hyperthermophilic archaea Pyrococcus abyssi GE5 and Pyrococcus furiosus DSM 3638.</title>
        <authorList>
            <person name="Gao J."/>
            <person name="Wang J."/>
        </authorList>
    </citation>
    <scope>GENOME REANNOTATION</scope>
    <source>
        <strain>GE5 / Orsay</strain>
    </source>
</reference>
<feature type="chain" id="PRO_0000129338" description="Large ribosomal subunit protein uL4">
    <location>
        <begin position="1"/>
        <end position="255"/>
    </location>
</feature>
<dbReference type="EMBL" id="AJ248284">
    <property type="protein sequence ID" value="CAB49263.1"/>
    <property type="molecule type" value="Genomic_DNA"/>
</dbReference>
<dbReference type="EMBL" id="HE613800">
    <property type="protein sequence ID" value="CCE69718.1"/>
    <property type="molecule type" value="Genomic_DNA"/>
</dbReference>
<dbReference type="PIR" id="H75147">
    <property type="entry name" value="H75147"/>
</dbReference>
<dbReference type="RefSeq" id="WP_010867463.1">
    <property type="nucleotide sequence ID" value="NC_000868.1"/>
</dbReference>
<dbReference type="SMR" id="Q9V1T6"/>
<dbReference type="STRING" id="272844.PAB2121"/>
<dbReference type="KEGG" id="pab:PAB2121"/>
<dbReference type="PATRIC" id="fig|272844.11.peg.362"/>
<dbReference type="eggNOG" id="arCOG04071">
    <property type="taxonomic scope" value="Archaea"/>
</dbReference>
<dbReference type="HOGENOM" id="CLU_026535_0_0_2"/>
<dbReference type="OrthoDB" id="10737at2157"/>
<dbReference type="PhylomeDB" id="Q9V1T6"/>
<dbReference type="Proteomes" id="UP000000810">
    <property type="component" value="Chromosome"/>
</dbReference>
<dbReference type="Proteomes" id="UP000009139">
    <property type="component" value="Chromosome"/>
</dbReference>
<dbReference type="GO" id="GO:1990904">
    <property type="term" value="C:ribonucleoprotein complex"/>
    <property type="evidence" value="ECO:0007669"/>
    <property type="project" value="UniProtKB-KW"/>
</dbReference>
<dbReference type="GO" id="GO:0005840">
    <property type="term" value="C:ribosome"/>
    <property type="evidence" value="ECO:0007669"/>
    <property type="project" value="UniProtKB-KW"/>
</dbReference>
<dbReference type="GO" id="GO:0019843">
    <property type="term" value="F:rRNA binding"/>
    <property type="evidence" value="ECO:0007669"/>
    <property type="project" value="UniProtKB-UniRule"/>
</dbReference>
<dbReference type="GO" id="GO:0003735">
    <property type="term" value="F:structural constituent of ribosome"/>
    <property type="evidence" value="ECO:0007669"/>
    <property type="project" value="InterPro"/>
</dbReference>
<dbReference type="GO" id="GO:0006412">
    <property type="term" value="P:translation"/>
    <property type="evidence" value="ECO:0007669"/>
    <property type="project" value="UniProtKB-UniRule"/>
</dbReference>
<dbReference type="FunFam" id="3.40.1370.10:FF:000011">
    <property type="entry name" value="50S ribosomal protein L4"/>
    <property type="match status" value="1"/>
</dbReference>
<dbReference type="Gene3D" id="3.40.1370.10">
    <property type="match status" value="1"/>
</dbReference>
<dbReference type="HAMAP" id="MF_01328_A">
    <property type="entry name" value="Ribosomal_uL4_A"/>
    <property type="match status" value="1"/>
</dbReference>
<dbReference type="InterPro" id="IPR002136">
    <property type="entry name" value="Ribosomal_uL4"/>
</dbReference>
<dbReference type="InterPro" id="IPR023574">
    <property type="entry name" value="Ribosomal_uL4_dom_sf"/>
</dbReference>
<dbReference type="InterPro" id="IPR013000">
    <property type="entry name" value="Ribosomal_uL4_euk/arc_CS"/>
</dbReference>
<dbReference type="InterPro" id="IPR045240">
    <property type="entry name" value="Ribosomal_uL4_euk/arch"/>
</dbReference>
<dbReference type="InterPro" id="IPR019970">
    <property type="entry name" value="Ribosomall_uL4-arc"/>
</dbReference>
<dbReference type="NCBIfam" id="TIGR03672">
    <property type="entry name" value="rpl4p_arch"/>
    <property type="match status" value="1"/>
</dbReference>
<dbReference type="PANTHER" id="PTHR19431">
    <property type="entry name" value="60S RIBOSOMAL PROTEIN L4"/>
    <property type="match status" value="1"/>
</dbReference>
<dbReference type="Pfam" id="PF00573">
    <property type="entry name" value="Ribosomal_L4"/>
    <property type="match status" value="1"/>
</dbReference>
<dbReference type="SUPFAM" id="SSF52166">
    <property type="entry name" value="Ribosomal protein L4"/>
    <property type="match status" value="1"/>
</dbReference>
<dbReference type="PROSITE" id="PS00939">
    <property type="entry name" value="RIBOSOMAL_L1E"/>
    <property type="match status" value="1"/>
</dbReference>
<organism>
    <name type="scientific">Pyrococcus abyssi (strain GE5 / Orsay)</name>
    <dbReference type="NCBI Taxonomy" id="272844"/>
    <lineage>
        <taxon>Archaea</taxon>
        <taxon>Methanobacteriati</taxon>
        <taxon>Methanobacteriota</taxon>
        <taxon>Thermococci</taxon>
        <taxon>Thermococcales</taxon>
        <taxon>Thermococcaceae</taxon>
        <taxon>Pyrococcus</taxon>
    </lineage>
</organism>
<gene>
    <name evidence="1" type="primary">rpl4</name>
    <name evidence="1" type="synonym">rpl4lp</name>
    <name type="ordered locus">PYRAB03410</name>
    <name type="ORF">PAB2121</name>
</gene>
<accession>Q9V1T6</accession>
<accession>G8ZHX5</accession>
<name>RL4_PYRAB</name>
<keyword id="KW-0687">Ribonucleoprotein</keyword>
<keyword id="KW-0689">Ribosomal protein</keyword>
<keyword id="KW-0694">RNA-binding</keyword>
<keyword id="KW-0699">rRNA-binding</keyword>
<comment type="function">
    <text evidence="1">One of the primary rRNA binding proteins, this protein initially binds near the 5'-end of the 23S rRNA. It is important during the early stages of 50S assembly. It makes multiple contacts with different domains of the 23S rRNA in the assembled 50S subunit and ribosome.</text>
</comment>
<comment type="function">
    <text evidence="1">Forms part of the polypeptide exit tunnel.</text>
</comment>
<comment type="subunit">
    <text evidence="1">Part of the 50S ribosomal subunit.</text>
</comment>
<comment type="similarity">
    <text evidence="1">Belongs to the universal ribosomal protein uL4 family.</text>
</comment>
<sequence length="255" mass="28702">MKVKVFDLNGQPVDEIELPKVFFTPFRPDLIRRAVIASWTHRIQPQGRDPMAGKRRVTENIGKGHGMARVERLKTPPRYAAFVPFARGGRRTHPPKVEKIIWEGINKKERRLAIMSAIAATANYDIVKARGHIIDNVPQLPLIVVDDLQKVSKTRETREIFKKLGIWDDIERAKEKTGIRAGKGKMRGRRYKKAKGPLIVVGKNEGIVFGARNHPGVDVVVVDNLGVEHLAPGTHPGRLTVWTVSAIERLKEIYG</sequence>
<evidence type="ECO:0000255" key="1">
    <source>
        <dbReference type="HAMAP-Rule" id="MF_01328"/>
    </source>
</evidence>
<evidence type="ECO:0000305" key="2"/>